<accession>Q7M3Y3</accession>
<accession>O44077</accession>
<accession>Q9TXE2</accession>
<dbReference type="EMBL" id="AB009368">
    <property type="protein sequence ID" value="BAA23775.1"/>
    <property type="molecule type" value="mRNA"/>
</dbReference>
<dbReference type="PIR" id="JE0233">
    <property type="entry name" value="JE0233"/>
</dbReference>
<dbReference type="PDB" id="3TZ1">
    <property type="method" value="X-ray"/>
    <property type="resolution" value="1.80 A"/>
    <property type="chains" value="B=143-166"/>
</dbReference>
<dbReference type="PDBsum" id="3TZ1"/>
<dbReference type="SMR" id="Q7M3Y3"/>
<dbReference type="iPTMnet" id="Q7M3Y3"/>
<dbReference type="GO" id="GO:0005861">
    <property type="term" value="C:troponin complex"/>
    <property type="evidence" value="ECO:0007669"/>
    <property type="project" value="InterPro"/>
</dbReference>
<dbReference type="GO" id="GO:0003779">
    <property type="term" value="F:actin binding"/>
    <property type="evidence" value="ECO:0007669"/>
    <property type="project" value="UniProtKB-KW"/>
</dbReference>
<dbReference type="GO" id="GO:0006936">
    <property type="term" value="P:muscle contraction"/>
    <property type="evidence" value="ECO:0007669"/>
    <property type="project" value="TreeGrafter"/>
</dbReference>
<dbReference type="Gene3D" id="1.20.5.350">
    <property type="match status" value="1"/>
</dbReference>
<dbReference type="InterPro" id="IPR001978">
    <property type="entry name" value="Troponin"/>
</dbReference>
<dbReference type="InterPro" id="IPR050875">
    <property type="entry name" value="Troponin_I"/>
</dbReference>
<dbReference type="InterPro" id="IPR038077">
    <property type="entry name" value="Troponin_sf"/>
</dbReference>
<dbReference type="PANTHER" id="PTHR13738">
    <property type="entry name" value="TROPONIN I"/>
    <property type="match status" value="1"/>
</dbReference>
<dbReference type="PANTHER" id="PTHR13738:SF1">
    <property type="entry name" value="TROPONIN I"/>
    <property type="match status" value="1"/>
</dbReference>
<dbReference type="Pfam" id="PF00992">
    <property type="entry name" value="Troponin"/>
    <property type="match status" value="1"/>
</dbReference>
<dbReference type="SUPFAM" id="SSF90250">
    <property type="entry name" value="Troponin coil-coiled subunits"/>
    <property type="match status" value="1"/>
</dbReference>
<feature type="chain" id="PRO_0000186160" description="Troponin I">
    <location>
        <begin position="1"/>
        <end position="292"/>
    </location>
</feature>
<feature type="region of interest" description="Disordered" evidence="2">
    <location>
        <begin position="1"/>
        <end position="149"/>
    </location>
</feature>
<feature type="region of interest" description="Actin-binding" evidence="1">
    <location>
        <begin position="237"/>
        <end position="250"/>
    </location>
</feature>
<feature type="region of interest" description="Disordered" evidence="2">
    <location>
        <begin position="255"/>
        <end position="292"/>
    </location>
</feature>
<feature type="compositionally biased region" description="Low complexity" evidence="2">
    <location>
        <begin position="46"/>
        <end position="55"/>
    </location>
</feature>
<feature type="compositionally biased region" description="Basic and acidic residues" evidence="2">
    <location>
        <begin position="58"/>
        <end position="134"/>
    </location>
</feature>
<feature type="modified residue" description="N-acetylserine" evidence="4">
    <location>
        <position position="1"/>
    </location>
</feature>
<feature type="sequence conflict" description="In Ref. 1; AA sequence." evidence="3" ref="1">
    <original>E</original>
    <variation>I</variation>
    <location>
        <position position="279"/>
    </location>
</feature>
<feature type="sequence conflict" description="In Ref. 2; BAA23775." evidence="3" ref="2">
    <original>N</original>
    <variation>G</variation>
    <location>
        <position position="291"/>
    </location>
</feature>
<feature type="helix" evidence="5">
    <location>
        <begin position="146"/>
        <end position="164"/>
    </location>
</feature>
<name>TNNI_CHLNI</name>
<comment type="function">
    <text>Troponin I is the inhibitory subunit of troponin, the thin filament regulatory complex which confers calcium-sensitivity to striated muscle actomyosin ATPase activity.</text>
</comment>
<comment type="similarity">
    <text evidence="3">Belongs to the troponin I family.</text>
</comment>
<proteinExistence type="evidence at protein level"/>
<organism>
    <name type="scientific">Chlamys nipponensis akazara</name>
    <name type="common">Akazara scallop</name>
    <name type="synonym">Japanese scallop</name>
    <dbReference type="NCBI Taxonomy" id="6571"/>
    <lineage>
        <taxon>Eukaryota</taxon>
        <taxon>Metazoa</taxon>
        <taxon>Spiralia</taxon>
        <taxon>Lophotrochozoa</taxon>
        <taxon>Mollusca</taxon>
        <taxon>Bivalvia</taxon>
        <taxon>Autobranchia</taxon>
        <taxon>Pteriomorphia</taxon>
        <taxon>Pectinida</taxon>
        <taxon>Pectinoidea</taxon>
        <taxon>Pectinidae</taxon>
        <taxon>Chlamys</taxon>
    </lineage>
</organism>
<keyword id="KW-0002">3D-structure</keyword>
<keyword id="KW-0007">Acetylation</keyword>
<keyword id="KW-0009">Actin-binding</keyword>
<keyword id="KW-0903">Direct protein sequencing</keyword>
<keyword id="KW-0514">Muscle protein</keyword>
<evidence type="ECO:0000250" key="1"/>
<evidence type="ECO:0000256" key="2">
    <source>
        <dbReference type="SAM" id="MobiDB-lite"/>
    </source>
</evidence>
<evidence type="ECO:0000305" key="3"/>
<evidence type="ECO:0000305" key="4">
    <source>
    </source>
</evidence>
<evidence type="ECO:0007829" key="5">
    <source>
        <dbReference type="PDB" id="3TZ1"/>
    </source>
</evidence>
<protein>
    <recommendedName>
        <fullName>Troponin I</fullName>
        <shortName>TnI</shortName>
    </recommendedName>
</protein>
<reference key="1">
    <citation type="journal article" date="1998" name="J. Biochem.">
        <title>Amino acid sequence of troponin-I from Akazara scallop striated adductor muscle.</title>
        <authorList>
            <person name="Tanaka H."/>
            <person name="Ojima T."/>
            <person name="Nishita K."/>
        </authorList>
    </citation>
    <scope>PROTEIN SEQUENCE</scope>
    <scope>ACETYLATION AT SER-1</scope>
</reference>
<reference key="2">
    <citation type="submission" date="1997-12" db="EMBL/GenBank/DDBJ databases">
        <title>cDNA for Akazara scallop troponin I.</title>
        <authorList>
            <person name="Nishita K."/>
            <person name="Ojima T."/>
            <person name="Soejima T."/>
        </authorList>
    </citation>
    <scope>NUCLEOTIDE SEQUENCE [MRNA] OF 22-292</scope>
</reference>
<reference key="3">
    <citation type="journal article" date="1995" name="J. Biochem.">
        <title>Amino acid sequence of C-terminal 17 kDa CNBr-fragment of Akazara scallop troponin-I.</title>
        <authorList>
            <person name="Ojima T."/>
            <person name="Tanaka H."/>
            <person name="Nishita K."/>
        </authorList>
    </citation>
    <scope>PROTEIN SEQUENCE OF 158-292</scope>
</reference>
<sequence length="292" mass="34636">SSLEERRAARAARRRKQDENEGGEEQEETTSRRSRRRQQEDEEDSYSAPAEPAYDAEAENRRRQQQEEEEAAARAAEEEYNRQQEELRRQRQEEERQRREEEQRRQQEEEERLRLEREEQEREEEARRMAEEQKKKKKKGLGGLSPEKKKMLKKLIMQKAAEDLANEAKAKAEAKEKYINDLVPKFSTDGKDVAALQALCKDFHKRLASLEEDVYDWEAKIRKQDFEINELTLKVNDTKGKFVKPVLRKVNKTESKLDKIQRKEAKKSDFRDNLKSSREHEADKEGGEGENE</sequence>